<proteinExistence type="inferred from homology"/>
<feature type="chain" id="PRO_0000242379" description="Large ribosomal subunit protein uL4">
    <location>
        <begin position="1"/>
        <end position="207"/>
    </location>
</feature>
<evidence type="ECO:0000255" key="1">
    <source>
        <dbReference type="HAMAP-Rule" id="MF_01328"/>
    </source>
</evidence>
<evidence type="ECO:0000305" key="2"/>
<reference key="1">
    <citation type="journal article" date="2009" name="BMC Microbiol.">
        <title>The genome sequence of Geobacter metallireducens: features of metabolism, physiology and regulation common and dissimilar to Geobacter sulfurreducens.</title>
        <authorList>
            <person name="Aklujkar M."/>
            <person name="Krushkal J."/>
            <person name="DiBartolo G."/>
            <person name="Lapidus A."/>
            <person name="Land M.L."/>
            <person name="Lovley D.R."/>
        </authorList>
    </citation>
    <scope>NUCLEOTIDE SEQUENCE [LARGE SCALE GENOMIC DNA]</scope>
    <source>
        <strain>ATCC 53774 / DSM 7210 / GS-15</strain>
    </source>
</reference>
<accession>Q39Y05</accession>
<dbReference type="EMBL" id="CP000148">
    <property type="protein sequence ID" value="ABB30869.2"/>
    <property type="molecule type" value="Genomic_DNA"/>
</dbReference>
<dbReference type="RefSeq" id="WP_004514238.1">
    <property type="nucleotide sequence ID" value="NC_007517.1"/>
</dbReference>
<dbReference type="SMR" id="Q39Y05"/>
<dbReference type="STRING" id="269799.Gmet_0627"/>
<dbReference type="KEGG" id="gme:Gmet_0627"/>
<dbReference type="eggNOG" id="COG0088">
    <property type="taxonomic scope" value="Bacteria"/>
</dbReference>
<dbReference type="HOGENOM" id="CLU_041575_5_2_7"/>
<dbReference type="Proteomes" id="UP000007073">
    <property type="component" value="Chromosome"/>
</dbReference>
<dbReference type="GO" id="GO:1990904">
    <property type="term" value="C:ribonucleoprotein complex"/>
    <property type="evidence" value="ECO:0007669"/>
    <property type="project" value="UniProtKB-KW"/>
</dbReference>
<dbReference type="GO" id="GO:0005840">
    <property type="term" value="C:ribosome"/>
    <property type="evidence" value="ECO:0007669"/>
    <property type="project" value="UniProtKB-KW"/>
</dbReference>
<dbReference type="GO" id="GO:0019843">
    <property type="term" value="F:rRNA binding"/>
    <property type="evidence" value="ECO:0007669"/>
    <property type="project" value="UniProtKB-UniRule"/>
</dbReference>
<dbReference type="GO" id="GO:0003735">
    <property type="term" value="F:structural constituent of ribosome"/>
    <property type="evidence" value="ECO:0007669"/>
    <property type="project" value="InterPro"/>
</dbReference>
<dbReference type="GO" id="GO:0006412">
    <property type="term" value="P:translation"/>
    <property type="evidence" value="ECO:0007669"/>
    <property type="project" value="UniProtKB-UniRule"/>
</dbReference>
<dbReference type="Gene3D" id="3.40.1370.10">
    <property type="match status" value="1"/>
</dbReference>
<dbReference type="HAMAP" id="MF_01328_B">
    <property type="entry name" value="Ribosomal_uL4_B"/>
    <property type="match status" value="1"/>
</dbReference>
<dbReference type="InterPro" id="IPR002136">
    <property type="entry name" value="Ribosomal_uL4"/>
</dbReference>
<dbReference type="InterPro" id="IPR013005">
    <property type="entry name" value="Ribosomal_uL4-like"/>
</dbReference>
<dbReference type="InterPro" id="IPR023574">
    <property type="entry name" value="Ribosomal_uL4_dom_sf"/>
</dbReference>
<dbReference type="NCBIfam" id="TIGR03953">
    <property type="entry name" value="rplD_bact"/>
    <property type="match status" value="1"/>
</dbReference>
<dbReference type="PANTHER" id="PTHR10746">
    <property type="entry name" value="50S RIBOSOMAL PROTEIN L4"/>
    <property type="match status" value="1"/>
</dbReference>
<dbReference type="PANTHER" id="PTHR10746:SF6">
    <property type="entry name" value="LARGE RIBOSOMAL SUBUNIT PROTEIN UL4M"/>
    <property type="match status" value="1"/>
</dbReference>
<dbReference type="Pfam" id="PF00573">
    <property type="entry name" value="Ribosomal_L4"/>
    <property type="match status" value="1"/>
</dbReference>
<dbReference type="SUPFAM" id="SSF52166">
    <property type="entry name" value="Ribosomal protein L4"/>
    <property type="match status" value="1"/>
</dbReference>
<protein>
    <recommendedName>
        <fullName evidence="1">Large ribosomal subunit protein uL4</fullName>
    </recommendedName>
    <alternativeName>
        <fullName evidence="2">50S ribosomal protein L4</fullName>
    </alternativeName>
</protein>
<organism>
    <name type="scientific">Geobacter metallireducens (strain ATCC 53774 / DSM 7210 / GS-15)</name>
    <dbReference type="NCBI Taxonomy" id="269799"/>
    <lineage>
        <taxon>Bacteria</taxon>
        <taxon>Pseudomonadati</taxon>
        <taxon>Thermodesulfobacteriota</taxon>
        <taxon>Desulfuromonadia</taxon>
        <taxon>Geobacterales</taxon>
        <taxon>Geobacteraceae</taxon>
        <taxon>Geobacter</taxon>
    </lineage>
</organism>
<comment type="function">
    <text evidence="1">One of the primary rRNA binding proteins, this protein initially binds near the 5'-end of the 23S rRNA. It is important during the early stages of 50S assembly. It makes multiple contacts with different domains of the 23S rRNA in the assembled 50S subunit and ribosome.</text>
</comment>
<comment type="function">
    <text evidence="1">Forms part of the polypeptide exit tunnel.</text>
</comment>
<comment type="subunit">
    <text evidence="1">Part of the 50S ribosomal subunit.</text>
</comment>
<comment type="similarity">
    <text evidence="1">Belongs to the universal ribosomal protein uL4 family.</text>
</comment>
<keyword id="KW-1185">Reference proteome</keyword>
<keyword id="KW-0687">Ribonucleoprotein</keyword>
<keyword id="KW-0689">Ribosomal protein</keyword>
<keyword id="KW-0694">RNA-binding</keyword>
<keyword id="KW-0699">rRNA-binding</keyword>
<gene>
    <name evidence="1" type="primary">rplD</name>
    <name type="ordered locus">Gmet_0627</name>
</gene>
<name>RL4_GEOMG</name>
<sequence length="207" mass="22389">MATIDVFDINKNKVGEMDLSDAVFNGDVREYLIHEAVKVQLANRRAGTVGVKNRAAVSGGGKKPFKQKGTGQARQGCIRAPHYVGGGVAFGPQAKTYALSMNKKARKAAVRSALSMLFKENKLSVLDCLSLPSISTKGFVGVLKTFDVTKTLVIIDEANTNLELSARNVKDVKVLKAEHLNVFDIVKFNNIILTQSAVRKIEGALQS</sequence>